<keyword id="KW-0479">Metal-binding</keyword>
<keyword id="KW-1185">Reference proteome</keyword>
<keyword id="KW-0862">Zinc</keyword>
<feature type="chain" id="PRO_1000200409" description="DNA gyrase inhibitor YacG">
    <location>
        <begin position="1"/>
        <end position="70"/>
    </location>
</feature>
<feature type="binding site" evidence="1">
    <location>
        <position position="20"/>
    </location>
    <ligand>
        <name>Zn(2+)</name>
        <dbReference type="ChEBI" id="CHEBI:29105"/>
    </ligand>
</feature>
<feature type="binding site" evidence="1">
    <location>
        <position position="23"/>
    </location>
    <ligand>
        <name>Zn(2+)</name>
        <dbReference type="ChEBI" id="CHEBI:29105"/>
    </ligand>
</feature>
<feature type="binding site" evidence="1">
    <location>
        <position position="35"/>
    </location>
    <ligand>
        <name>Zn(2+)</name>
        <dbReference type="ChEBI" id="CHEBI:29105"/>
    </ligand>
</feature>
<feature type="binding site" evidence="1">
    <location>
        <position position="39"/>
    </location>
    <ligand>
        <name>Zn(2+)</name>
        <dbReference type="ChEBI" id="CHEBI:29105"/>
    </ligand>
</feature>
<sequence length="70" mass="8029">MLEDKKAAAKVEPLRKTRPCPECGKPSNREHYPFCSNRCREVDLSRWLTGSYAIPVADDETKADYPDEEN</sequence>
<proteinExistence type="inferred from homology"/>
<comment type="function">
    <text evidence="1">Inhibits all the catalytic activities of DNA gyrase by preventing its interaction with DNA. Acts by binding directly to the C-terminal domain of GyrB, which probably disrupts DNA binding by the gyrase.</text>
</comment>
<comment type="cofactor">
    <cofactor evidence="1">
        <name>Zn(2+)</name>
        <dbReference type="ChEBI" id="CHEBI:29105"/>
    </cofactor>
    <text evidence="1">Binds 1 zinc ion.</text>
</comment>
<comment type="subunit">
    <text evidence="1">Interacts with GyrB.</text>
</comment>
<comment type="similarity">
    <text evidence="1">Belongs to the DNA gyrase inhibitor YacG family.</text>
</comment>
<gene>
    <name evidence="1" type="primary">yacG</name>
    <name type="ordered locus">RHE_CH00586</name>
</gene>
<organism>
    <name type="scientific">Rhizobium etli (strain ATCC 51251 / DSM 11541 / JCM 21823 / NBRC 15573 / CFN 42)</name>
    <dbReference type="NCBI Taxonomy" id="347834"/>
    <lineage>
        <taxon>Bacteria</taxon>
        <taxon>Pseudomonadati</taxon>
        <taxon>Pseudomonadota</taxon>
        <taxon>Alphaproteobacteria</taxon>
        <taxon>Hyphomicrobiales</taxon>
        <taxon>Rhizobiaceae</taxon>
        <taxon>Rhizobium/Agrobacterium group</taxon>
        <taxon>Rhizobium</taxon>
    </lineage>
</organism>
<accession>Q2KCN3</accession>
<evidence type="ECO:0000255" key="1">
    <source>
        <dbReference type="HAMAP-Rule" id="MF_00649"/>
    </source>
</evidence>
<reference key="1">
    <citation type="journal article" date="2006" name="Proc. Natl. Acad. Sci. U.S.A.">
        <title>The partitioned Rhizobium etli genome: genetic and metabolic redundancy in seven interacting replicons.</title>
        <authorList>
            <person name="Gonzalez V."/>
            <person name="Santamaria R.I."/>
            <person name="Bustos P."/>
            <person name="Hernandez-Gonzalez I."/>
            <person name="Medrano-Soto A."/>
            <person name="Moreno-Hagelsieb G."/>
            <person name="Janga S.C."/>
            <person name="Ramirez M.A."/>
            <person name="Jimenez-Jacinto V."/>
            <person name="Collado-Vides J."/>
            <person name="Davila G."/>
        </authorList>
    </citation>
    <scope>NUCLEOTIDE SEQUENCE [LARGE SCALE GENOMIC DNA]</scope>
    <source>
        <strain>ATCC 51251 / DSM 11541 / JCM 21823 / NBRC 15573 / CFN 42</strain>
    </source>
</reference>
<dbReference type="EMBL" id="CP000133">
    <property type="protein sequence ID" value="ABC89403.1"/>
    <property type="molecule type" value="Genomic_DNA"/>
</dbReference>
<dbReference type="RefSeq" id="WP_011423952.1">
    <property type="nucleotide sequence ID" value="NC_007761.1"/>
</dbReference>
<dbReference type="SMR" id="Q2KCN3"/>
<dbReference type="KEGG" id="ret:RHE_CH00586"/>
<dbReference type="eggNOG" id="COG3024">
    <property type="taxonomic scope" value="Bacteria"/>
</dbReference>
<dbReference type="HOGENOM" id="CLU_178280_2_2_5"/>
<dbReference type="OrthoDB" id="9809663at2"/>
<dbReference type="Proteomes" id="UP000001936">
    <property type="component" value="Chromosome"/>
</dbReference>
<dbReference type="GO" id="GO:0008657">
    <property type="term" value="F:DNA topoisomerase type II (double strand cut, ATP-hydrolyzing) inhibitor activity"/>
    <property type="evidence" value="ECO:0007669"/>
    <property type="project" value="UniProtKB-UniRule"/>
</dbReference>
<dbReference type="GO" id="GO:0008270">
    <property type="term" value="F:zinc ion binding"/>
    <property type="evidence" value="ECO:0007669"/>
    <property type="project" value="UniProtKB-UniRule"/>
</dbReference>
<dbReference type="GO" id="GO:0006355">
    <property type="term" value="P:regulation of DNA-templated transcription"/>
    <property type="evidence" value="ECO:0007669"/>
    <property type="project" value="InterPro"/>
</dbReference>
<dbReference type="Gene3D" id="3.30.50.10">
    <property type="entry name" value="Erythroid Transcription Factor GATA-1, subunit A"/>
    <property type="match status" value="1"/>
</dbReference>
<dbReference type="HAMAP" id="MF_00649">
    <property type="entry name" value="DNA_gyrase_inhibitor_YacG"/>
    <property type="match status" value="1"/>
</dbReference>
<dbReference type="InterPro" id="IPR005584">
    <property type="entry name" value="DNA_gyrase_inhibitor_YacG"/>
</dbReference>
<dbReference type="InterPro" id="IPR013088">
    <property type="entry name" value="Znf_NHR/GATA"/>
</dbReference>
<dbReference type="NCBIfam" id="NF002362">
    <property type="entry name" value="PRK01343.1"/>
    <property type="match status" value="1"/>
</dbReference>
<dbReference type="PANTHER" id="PTHR36150">
    <property type="entry name" value="DNA GYRASE INHIBITOR YACG"/>
    <property type="match status" value="1"/>
</dbReference>
<dbReference type="PANTHER" id="PTHR36150:SF1">
    <property type="entry name" value="DNA GYRASE INHIBITOR YACG"/>
    <property type="match status" value="1"/>
</dbReference>
<dbReference type="Pfam" id="PF03884">
    <property type="entry name" value="YacG"/>
    <property type="match status" value="1"/>
</dbReference>
<dbReference type="SUPFAM" id="SSF57716">
    <property type="entry name" value="Glucocorticoid receptor-like (DNA-binding domain)"/>
    <property type="match status" value="1"/>
</dbReference>
<name>YACG_RHIEC</name>
<protein>
    <recommendedName>
        <fullName evidence="1">DNA gyrase inhibitor YacG</fullName>
    </recommendedName>
</protein>